<gene>
    <name type="ORF">POPTRDRAFT_833824</name>
</gene>
<organism>
    <name type="scientific">Populus trichocarpa</name>
    <name type="common">Western balsam poplar</name>
    <name type="synonym">Populus balsamifera subsp. trichocarpa</name>
    <dbReference type="NCBI Taxonomy" id="3694"/>
    <lineage>
        <taxon>Eukaryota</taxon>
        <taxon>Viridiplantae</taxon>
        <taxon>Streptophyta</taxon>
        <taxon>Embryophyta</taxon>
        <taxon>Tracheophyta</taxon>
        <taxon>Spermatophyta</taxon>
        <taxon>Magnoliopsida</taxon>
        <taxon>eudicotyledons</taxon>
        <taxon>Gunneridae</taxon>
        <taxon>Pentapetalae</taxon>
        <taxon>rosids</taxon>
        <taxon>fabids</taxon>
        <taxon>Malpighiales</taxon>
        <taxon>Salicaceae</taxon>
        <taxon>Saliceae</taxon>
        <taxon>Populus</taxon>
    </lineage>
</organism>
<reference key="1">
    <citation type="journal article" date="2006" name="Science">
        <title>The genome of black cottonwood, Populus trichocarpa (Torr. &amp; Gray).</title>
        <authorList>
            <person name="Tuskan G.A."/>
            <person name="Difazio S."/>
            <person name="Jansson S."/>
            <person name="Bohlmann J."/>
            <person name="Grigoriev I."/>
            <person name="Hellsten U."/>
            <person name="Putnam N."/>
            <person name="Ralph S."/>
            <person name="Rombauts S."/>
            <person name="Salamov A."/>
            <person name="Schein J."/>
            <person name="Sterck L."/>
            <person name="Aerts A."/>
            <person name="Bhalerao R.R."/>
            <person name="Bhalerao R.P."/>
            <person name="Blaudez D."/>
            <person name="Boerjan W."/>
            <person name="Brun A."/>
            <person name="Brunner A."/>
            <person name="Busov V."/>
            <person name="Campbell M."/>
            <person name="Carlson J."/>
            <person name="Chalot M."/>
            <person name="Chapman J."/>
            <person name="Chen G.-L."/>
            <person name="Cooper D."/>
            <person name="Coutinho P.M."/>
            <person name="Couturier J."/>
            <person name="Covert S."/>
            <person name="Cronk Q."/>
            <person name="Cunningham R."/>
            <person name="Davis J."/>
            <person name="Degroeve S."/>
            <person name="Dejardin A."/>
            <person name="dePamphilis C.W."/>
            <person name="Detter J."/>
            <person name="Dirks B."/>
            <person name="Dubchak I."/>
            <person name="Duplessis S."/>
            <person name="Ehlting J."/>
            <person name="Ellis B."/>
            <person name="Gendler K."/>
            <person name="Goodstein D."/>
            <person name="Gribskov M."/>
            <person name="Grimwood J."/>
            <person name="Groover A."/>
            <person name="Gunter L."/>
            <person name="Hamberger B."/>
            <person name="Heinze B."/>
            <person name="Helariutta Y."/>
            <person name="Henrissat B."/>
            <person name="Holligan D."/>
            <person name="Holt R."/>
            <person name="Huang W."/>
            <person name="Islam-Faridi N."/>
            <person name="Jones S."/>
            <person name="Jones-Rhoades M."/>
            <person name="Jorgensen R."/>
            <person name="Joshi C."/>
            <person name="Kangasjaervi J."/>
            <person name="Karlsson J."/>
            <person name="Kelleher C."/>
            <person name="Kirkpatrick R."/>
            <person name="Kirst M."/>
            <person name="Kohler A."/>
            <person name="Kalluri U."/>
            <person name="Larimer F."/>
            <person name="Leebens-Mack J."/>
            <person name="Leple J.-C."/>
            <person name="Locascio P."/>
            <person name="Lou Y."/>
            <person name="Lucas S."/>
            <person name="Martin F."/>
            <person name="Montanini B."/>
            <person name="Napoli C."/>
            <person name="Nelson D.R."/>
            <person name="Nelson C."/>
            <person name="Nieminen K."/>
            <person name="Nilsson O."/>
            <person name="Pereda V."/>
            <person name="Peter G."/>
            <person name="Philippe R."/>
            <person name="Pilate G."/>
            <person name="Poliakov A."/>
            <person name="Razumovskaya J."/>
            <person name="Richardson P."/>
            <person name="Rinaldi C."/>
            <person name="Ritland K."/>
            <person name="Rouze P."/>
            <person name="Ryaboy D."/>
            <person name="Schmutz J."/>
            <person name="Schrader J."/>
            <person name="Segerman B."/>
            <person name="Shin H."/>
            <person name="Siddiqui A."/>
            <person name="Sterky F."/>
            <person name="Terry A."/>
            <person name="Tsai C.-J."/>
            <person name="Uberbacher E."/>
            <person name="Unneberg P."/>
            <person name="Vahala J."/>
            <person name="Wall K."/>
            <person name="Wessler S."/>
            <person name="Yang G."/>
            <person name="Yin T."/>
            <person name="Douglas C."/>
            <person name="Marra M."/>
            <person name="Sandberg G."/>
            <person name="Van de Peer Y."/>
            <person name="Rokhsar D.S."/>
        </authorList>
    </citation>
    <scope>NUCLEOTIDE SEQUENCE [LARGE SCALE GENOMIC DNA]</scope>
    <source>
        <strain>cv. Nisqually</strain>
    </source>
</reference>
<reference key="2">
    <citation type="submission" date="2008-12" db="EMBL/GenBank/DDBJ databases">
        <authorList>
            <consortium name="US DOE Joint Genome Institute (JGI-PGF)"/>
            <person name="Grigoriev I.V."/>
            <person name="Terry A."/>
            <person name="Salamov A.A."/>
            <person name="Otillar R."/>
            <person name="Lou Y."/>
            <person name="Lucas S."/>
            <person name="Hammon N."/>
            <person name="Glavina del Rio T."/>
            <person name="Detter J."/>
            <person name="Kalin E."/>
            <person name="Tice H."/>
            <person name="Pitluck S."/>
            <person name="Chapman J."/>
            <person name="Putnam N.H."/>
            <person name="Brunner A."/>
            <person name="Busov V."/>
            <person name="Campbell M."/>
            <person name="Chalot M."/>
            <person name="Covert S."/>
            <person name="Davis J."/>
            <person name="DiFazio S."/>
            <person name="Gribskov M."/>
            <person name="Gunter L."/>
            <person name="Hamberger B."/>
            <person name="Jansson S."/>
            <person name="Joshi C."/>
            <person name="Larimer F."/>
            <person name="Martin F."/>
            <person name="Napoli C."/>
            <person name="Nelson D."/>
            <person name="Ralph S."/>
            <person name="Rombauts S."/>
            <person name="Rouze P."/>
            <person name="Schrader J."/>
            <person name="Tsai C."/>
            <person name="Vahala J."/>
            <person name="Tuskan G."/>
            <person name="Rokhsar D."/>
        </authorList>
    </citation>
    <scope>GENOME REANNOTATION</scope>
    <source>
        <strain>cv. Nisqually</strain>
    </source>
</reference>
<reference key="3">
    <citation type="journal article" date="2014" name="Plant Physiol.">
        <title>Functional and evolutionary analysis of the CASPARIAN STRIP MEMBRANE DOMAIN PROTEIN family.</title>
        <authorList>
            <person name="Roppolo D."/>
            <person name="Boeckmann B."/>
            <person name="Pfister A."/>
            <person name="Boutet E."/>
            <person name="Rubio M.C."/>
            <person name="Denervaud-Tendon V."/>
            <person name="Vermeer J.E."/>
            <person name="Gheyselinck J."/>
            <person name="Xenarios I."/>
            <person name="Geldner N."/>
        </authorList>
    </citation>
    <scope>GENE FAMILY</scope>
    <scope>NOMENCLATURE</scope>
</reference>
<proteinExistence type="inferred from homology"/>
<dbReference type="EMBL" id="CM009299">
    <property type="protein sequence ID" value="EEF01409.1"/>
    <property type="molecule type" value="Genomic_DNA"/>
</dbReference>
<dbReference type="RefSeq" id="XP_002315238.1">
    <property type="nucleotide sequence ID" value="XM_002315202.2"/>
</dbReference>
<dbReference type="SMR" id="B9HTL5"/>
<dbReference type="FunCoup" id="B9HTL5">
    <property type="interactions" value="1014"/>
</dbReference>
<dbReference type="STRING" id="3694.B9HTL5"/>
<dbReference type="KEGG" id="pop:7489586"/>
<dbReference type="eggNOG" id="ENOG502RY7Y">
    <property type="taxonomic scope" value="Eukaryota"/>
</dbReference>
<dbReference type="HOGENOM" id="CLU_066104_2_1_1"/>
<dbReference type="InParanoid" id="B9HTL5"/>
<dbReference type="OrthoDB" id="755577at2759"/>
<dbReference type="Proteomes" id="UP000006729">
    <property type="component" value="Chromosome 10"/>
</dbReference>
<dbReference type="ExpressionAtlas" id="B9HTL5">
    <property type="expression patterns" value="baseline and differential"/>
</dbReference>
<dbReference type="GO" id="GO:0005886">
    <property type="term" value="C:plasma membrane"/>
    <property type="evidence" value="ECO:0007669"/>
    <property type="project" value="UniProtKB-SubCell"/>
</dbReference>
<dbReference type="InterPro" id="IPR006459">
    <property type="entry name" value="CASP/CASPL"/>
</dbReference>
<dbReference type="InterPro" id="IPR006702">
    <property type="entry name" value="CASP_dom"/>
</dbReference>
<dbReference type="NCBIfam" id="TIGR01569">
    <property type="entry name" value="A_tha_TIGR01569"/>
    <property type="match status" value="1"/>
</dbReference>
<dbReference type="PANTHER" id="PTHR33573:SF30">
    <property type="entry name" value="CASP-LIKE PROTEIN 2C1-RELATED"/>
    <property type="match status" value="1"/>
</dbReference>
<dbReference type="PANTHER" id="PTHR33573">
    <property type="entry name" value="CASP-LIKE PROTEIN 4A4"/>
    <property type="match status" value="1"/>
</dbReference>
<dbReference type="Pfam" id="PF04535">
    <property type="entry name" value="CASP_dom"/>
    <property type="match status" value="1"/>
</dbReference>
<name>CSPLC_POPTR</name>
<evidence type="ECO:0000250" key="1"/>
<evidence type="ECO:0000255" key="2"/>
<evidence type="ECO:0000305" key="3"/>
<accession>B9HTL5</accession>
<feature type="chain" id="PRO_0000412043" description="CASP-like protein 2D1">
    <location>
        <begin position="1"/>
        <end position="170"/>
    </location>
</feature>
<feature type="topological domain" description="Cytoplasmic" evidence="2">
    <location>
        <begin position="1"/>
        <end position="4"/>
    </location>
</feature>
<feature type="transmembrane region" description="Helical" evidence="2">
    <location>
        <begin position="5"/>
        <end position="25"/>
    </location>
</feature>
<feature type="topological domain" description="Extracellular" evidence="2">
    <location>
        <begin position="26"/>
        <end position="47"/>
    </location>
</feature>
<feature type="transmembrane region" description="Helical" evidence="2">
    <location>
        <begin position="48"/>
        <end position="68"/>
    </location>
</feature>
<feature type="topological domain" description="Cytoplasmic" evidence="2">
    <location>
        <begin position="69"/>
        <end position="83"/>
    </location>
</feature>
<feature type="transmembrane region" description="Helical" evidence="2">
    <location>
        <begin position="84"/>
        <end position="104"/>
    </location>
</feature>
<feature type="topological domain" description="Extracellular" evidence="2">
    <location>
        <begin position="105"/>
        <end position="127"/>
    </location>
</feature>
<feature type="transmembrane region" description="Helical" evidence="2">
    <location>
        <begin position="128"/>
        <end position="148"/>
    </location>
</feature>
<feature type="topological domain" description="Cytoplasmic" evidence="2">
    <location>
        <begin position="149"/>
        <end position="170"/>
    </location>
</feature>
<keyword id="KW-1003">Cell membrane</keyword>
<keyword id="KW-0472">Membrane</keyword>
<keyword id="KW-1185">Reference proteome</keyword>
<keyword id="KW-0812">Transmembrane</keyword>
<keyword id="KW-1133">Transmembrane helix</keyword>
<sequence length="170" mass="19106">MLKLLDFSLRLSVIPLSVATIWLTVTNKQDNSIYGYLKYSDLTGLKYMVFISGICASYAFIAAVSTWIRCIVTKTWLFFVSDQIVAYLMVTSGTAVLEILYLAYNGDREVSWSEACTSYGKFCYRMKLAVILHALALSCFIILAVISAYRAFSIFEPPLVPSKVVEEDRA</sequence>
<protein>
    <recommendedName>
        <fullName>CASP-like protein 2D1</fullName>
        <shortName>PtCASPL2D1</shortName>
    </recommendedName>
</protein>
<comment type="subunit">
    <text evidence="1">Homodimer and heterodimers.</text>
</comment>
<comment type="subcellular location">
    <subcellularLocation>
        <location evidence="1">Cell membrane</location>
        <topology evidence="1">Multi-pass membrane protein</topology>
    </subcellularLocation>
</comment>
<comment type="similarity">
    <text evidence="3">Belongs to the Casparian strip membrane proteins (CASP) family.</text>
</comment>